<proteinExistence type="inferred from homology"/>
<feature type="signal peptide" evidence="1">
    <location>
        <begin position="1"/>
        <end position="23"/>
    </location>
</feature>
<feature type="chain" id="PRO_0000013807" description="Uncharacterized protein YbgO">
    <location>
        <begin position="24"/>
        <end position="353"/>
    </location>
</feature>
<reference key="1">
    <citation type="journal article" date="1996" name="DNA Res.">
        <title>A 718-kb DNA sequence of the Escherichia coli K-12 genome corresponding to the 12.7-28.0 min region on the linkage map.</title>
        <authorList>
            <person name="Oshima T."/>
            <person name="Aiba H."/>
            <person name="Baba T."/>
            <person name="Fujita K."/>
            <person name="Hayashi K."/>
            <person name="Honjo A."/>
            <person name="Ikemoto K."/>
            <person name="Inada T."/>
            <person name="Itoh T."/>
            <person name="Kajihara M."/>
            <person name="Kanai K."/>
            <person name="Kashimoto K."/>
            <person name="Kimura S."/>
            <person name="Kitagawa M."/>
            <person name="Makino K."/>
            <person name="Masuda S."/>
            <person name="Miki T."/>
            <person name="Mizobuchi K."/>
            <person name="Mori H."/>
            <person name="Motomura K."/>
            <person name="Nakamura Y."/>
            <person name="Nashimoto H."/>
            <person name="Nishio Y."/>
            <person name="Saito N."/>
            <person name="Sampei G."/>
            <person name="Seki Y."/>
            <person name="Tagami H."/>
            <person name="Takemoto K."/>
            <person name="Wada C."/>
            <person name="Yamamoto Y."/>
            <person name="Yano M."/>
            <person name="Horiuchi T."/>
        </authorList>
    </citation>
    <scope>NUCLEOTIDE SEQUENCE [LARGE SCALE GENOMIC DNA]</scope>
    <source>
        <strain>K12 / W3110 / ATCC 27325 / DSM 5911</strain>
    </source>
</reference>
<reference key="2">
    <citation type="journal article" date="1997" name="Science">
        <title>The complete genome sequence of Escherichia coli K-12.</title>
        <authorList>
            <person name="Blattner F.R."/>
            <person name="Plunkett G. III"/>
            <person name="Bloch C.A."/>
            <person name="Perna N.T."/>
            <person name="Burland V."/>
            <person name="Riley M."/>
            <person name="Collado-Vides J."/>
            <person name="Glasner J.D."/>
            <person name="Rode C.K."/>
            <person name="Mayhew G.F."/>
            <person name="Gregor J."/>
            <person name="Davis N.W."/>
            <person name="Kirkpatrick H.A."/>
            <person name="Goeden M.A."/>
            <person name="Rose D.J."/>
            <person name="Mau B."/>
            <person name="Shao Y."/>
        </authorList>
    </citation>
    <scope>NUCLEOTIDE SEQUENCE [LARGE SCALE GENOMIC DNA]</scope>
    <source>
        <strain>K12 / MG1655 / ATCC 47076</strain>
    </source>
</reference>
<reference key="3">
    <citation type="journal article" date="2006" name="Mol. Syst. Biol.">
        <title>Highly accurate genome sequences of Escherichia coli K-12 strains MG1655 and W3110.</title>
        <authorList>
            <person name="Hayashi K."/>
            <person name="Morooka N."/>
            <person name="Yamamoto Y."/>
            <person name="Fujita K."/>
            <person name="Isono K."/>
            <person name="Choi S."/>
            <person name="Ohtsubo E."/>
            <person name="Baba T."/>
            <person name="Wanner B.L."/>
            <person name="Mori H."/>
            <person name="Horiuchi T."/>
        </authorList>
    </citation>
    <scope>NUCLEOTIDE SEQUENCE [LARGE SCALE GENOMIC DNA]</scope>
    <source>
        <strain>K12 / W3110 / ATCC 27325 / DSM 5911</strain>
    </source>
</reference>
<evidence type="ECO:0000255" key="1"/>
<evidence type="ECO:0000305" key="2"/>
<organism>
    <name type="scientific">Escherichia coli (strain K12)</name>
    <dbReference type="NCBI Taxonomy" id="83333"/>
    <lineage>
        <taxon>Bacteria</taxon>
        <taxon>Pseudomonadati</taxon>
        <taxon>Pseudomonadota</taxon>
        <taxon>Gammaproteobacteria</taxon>
        <taxon>Enterobacterales</taxon>
        <taxon>Enterobacteriaceae</taxon>
        <taxon>Escherichia</taxon>
    </lineage>
</organism>
<name>YBGO_ECOLI</name>
<protein>
    <recommendedName>
        <fullName>Uncharacterized protein YbgO</fullName>
    </recommendedName>
</protein>
<dbReference type="EMBL" id="U00096">
    <property type="protein sequence ID" value="AAC73810.2"/>
    <property type="molecule type" value="Genomic_DNA"/>
</dbReference>
<dbReference type="EMBL" id="AP009048">
    <property type="protein sequence ID" value="BAA35380.2"/>
    <property type="molecule type" value="Genomic_DNA"/>
</dbReference>
<dbReference type="PIR" id="C64807">
    <property type="entry name" value="C64807"/>
</dbReference>
<dbReference type="RefSeq" id="NP_415244.4">
    <property type="nucleotide sequence ID" value="NC_000913.3"/>
</dbReference>
<dbReference type="RefSeq" id="WP_001272410.1">
    <property type="nucleotide sequence ID" value="NZ_SSZK01000033.1"/>
</dbReference>
<dbReference type="SMR" id="P75748"/>
<dbReference type="BioGRID" id="4259934">
    <property type="interactions" value="15"/>
</dbReference>
<dbReference type="FunCoup" id="P75748">
    <property type="interactions" value="59"/>
</dbReference>
<dbReference type="STRING" id="511145.b0716"/>
<dbReference type="PaxDb" id="511145-b0716"/>
<dbReference type="EnsemblBacteria" id="AAC73810">
    <property type="protein sequence ID" value="AAC73810"/>
    <property type="gene ID" value="b0716"/>
</dbReference>
<dbReference type="GeneID" id="947550"/>
<dbReference type="KEGG" id="ecj:JW5098"/>
<dbReference type="KEGG" id="eco:b0716"/>
<dbReference type="KEGG" id="ecoc:C3026_03580"/>
<dbReference type="PATRIC" id="fig|1411691.4.peg.1557"/>
<dbReference type="EchoBASE" id="EB3095"/>
<dbReference type="eggNOG" id="COG3539">
    <property type="taxonomic scope" value="Bacteria"/>
</dbReference>
<dbReference type="HOGENOM" id="CLU_064082_2_0_6"/>
<dbReference type="InParanoid" id="P75748"/>
<dbReference type="OMA" id="TTGYCYK"/>
<dbReference type="OrthoDB" id="8926940at2"/>
<dbReference type="PhylomeDB" id="P75748"/>
<dbReference type="BioCyc" id="EcoCyc:G6385-MONOMER"/>
<dbReference type="PRO" id="PR:P75748"/>
<dbReference type="Proteomes" id="UP000000625">
    <property type="component" value="Chromosome"/>
</dbReference>
<dbReference type="GO" id="GO:0009289">
    <property type="term" value="C:pilus"/>
    <property type="evidence" value="ECO:0007669"/>
    <property type="project" value="InterPro"/>
</dbReference>
<dbReference type="GO" id="GO:0007155">
    <property type="term" value="P:cell adhesion"/>
    <property type="evidence" value="ECO:0007669"/>
    <property type="project" value="InterPro"/>
</dbReference>
<dbReference type="Gene3D" id="2.60.40.1090">
    <property type="entry name" value="Fimbrial-type adhesion domain"/>
    <property type="match status" value="1"/>
</dbReference>
<dbReference type="InterPro" id="IPR036937">
    <property type="entry name" value="Adhesion_dom_fimbrial_sf"/>
</dbReference>
<dbReference type="InterPro" id="IPR008966">
    <property type="entry name" value="Adhesion_dom_sf"/>
</dbReference>
<dbReference type="SUPFAM" id="SSF49401">
    <property type="entry name" value="Bacterial adhesins"/>
    <property type="match status" value="1"/>
</dbReference>
<sequence>MSAGKGLLLVICLLFLPLKSAMALNCYFGTSGGAVEKSEAIQPFAVPGNAKPGDKIWESDDIKIPVYCDNNTNGNFESEHVYAWVNPYPGVQDRYYQLGVTYNGVDYDASLGKSRIDTNQCIDSKNIDIYTPEQIIAMGWQNKICSGDPANIHMSRTFLARMRLYVKIREMPPHDYQSTLSDYIVVQFDGAGSVNEDPTAQNLKYHITGLENIRVLDCSVNFSISPETQVIDFGKFNLLDIRRHTMSKTFSIKTTKSQNDQCTDGFKVSSSFYTEETLVEEDKALLIGNGLKLRLLDENASPYTFNKYAEYADFTSDMLVYEKTYTAELSSIPGTPIEAGPFDTVVLFKINYN</sequence>
<gene>
    <name type="primary">ybgO</name>
    <name type="ordered locus">b0716</name>
    <name type="ordered locus">JW5098</name>
</gene>
<accession>P75748</accession>
<accession>Q9R7S8</accession>
<keyword id="KW-1185">Reference proteome</keyword>
<keyword id="KW-0732">Signal</keyword>
<comment type="function">
    <text>May be involved in a fimbrial system chaperoned by YbgP and exported by YbgQ.</text>
</comment>
<comment type="similarity">
    <text evidence="2">To E.coli YqiI.</text>
</comment>